<name>TGT_HELHP</name>
<evidence type="ECO:0000255" key="1">
    <source>
        <dbReference type="HAMAP-Rule" id="MF_00168"/>
    </source>
</evidence>
<sequence>MQVTLQAQDGGARALSLKLAHSEVQTPVFMPVGTQGCVKALDSRDMSEILNAQIILVNTYHMYLRIGIERLKNFGGIARFAHFDRSYLSDSGGFQAFSLNKNAKVTNEGVAFKSHIDGSKHFFSPEYVLDIQYALNSDIMMVLDDLVGLPSSEERIADSIARTSDWAQKSLIYHQSQKARGLGLNNNLFAIIQGGVNEHFRTLCAKQLVDMGDFDGFAIGGLAVGETSEQMYKTISFTTPLMPVNKPRYLMGVGTPENIIESIALGVDMFDCVMPTRNARNATLFTHFGKINIKAAIFSNDQSPIDELCDCYTCQHFTRAYLCHLFRSQEMTYYRLASLHNLHYYLNLMREAREAILQGTFSAYRSSFYALREMEIPNNEY</sequence>
<organism>
    <name type="scientific">Helicobacter hepaticus (strain ATCC 51449 / 3B1)</name>
    <dbReference type="NCBI Taxonomy" id="235279"/>
    <lineage>
        <taxon>Bacteria</taxon>
        <taxon>Pseudomonadati</taxon>
        <taxon>Campylobacterota</taxon>
        <taxon>Epsilonproteobacteria</taxon>
        <taxon>Campylobacterales</taxon>
        <taxon>Helicobacteraceae</taxon>
        <taxon>Helicobacter</taxon>
    </lineage>
</organism>
<comment type="function">
    <text evidence="1">Catalyzes the base-exchange of a guanine (G) residue with the queuine precursor 7-aminomethyl-7-deazaguanine (PreQ1) at position 34 (anticodon wobble position) in tRNAs with GU(N) anticodons (tRNA-Asp, -Asn, -His and -Tyr). Catalysis occurs through a double-displacement mechanism. The nucleophile active site attacks the C1' of nucleotide 34 to detach the guanine base from the RNA, forming a covalent enzyme-RNA intermediate. The proton acceptor active site deprotonates the incoming PreQ1, allowing a nucleophilic attack on the C1' of the ribose to form the product. After dissociation, two additional enzymatic reactions on the tRNA convert PreQ1 to queuine (Q), resulting in the hypermodified nucleoside queuosine (7-(((4,5-cis-dihydroxy-2-cyclopenten-1-yl)amino)methyl)-7-deazaguanosine).</text>
</comment>
<comment type="catalytic activity">
    <reaction evidence="1">
        <text>7-aminomethyl-7-carbaguanine + guanosine(34) in tRNA = 7-aminomethyl-7-carbaguanosine(34) in tRNA + guanine</text>
        <dbReference type="Rhea" id="RHEA:24104"/>
        <dbReference type="Rhea" id="RHEA-COMP:10341"/>
        <dbReference type="Rhea" id="RHEA-COMP:10342"/>
        <dbReference type="ChEBI" id="CHEBI:16235"/>
        <dbReference type="ChEBI" id="CHEBI:58703"/>
        <dbReference type="ChEBI" id="CHEBI:74269"/>
        <dbReference type="ChEBI" id="CHEBI:82833"/>
        <dbReference type="EC" id="2.4.2.29"/>
    </reaction>
</comment>
<comment type="cofactor">
    <cofactor evidence="1">
        <name>Zn(2+)</name>
        <dbReference type="ChEBI" id="CHEBI:29105"/>
    </cofactor>
    <text evidence="1">Binds 1 zinc ion per subunit.</text>
</comment>
<comment type="pathway">
    <text evidence="1">tRNA modification; tRNA-queuosine biosynthesis.</text>
</comment>
<comment type="subunit">
    <text evidence="1">Homodimer. Within each dimer, one monomer is responsible for RNA recognition and catalysis, while the other monomer binds to the replacement base PreQ1.</text>
</comment>
<comment type="similarity">
    <text evidence="1">Belongs to the queuine tRNA-ribosyltransferase family.</text>
</comment>
<gene>
    <name evidence="1" type="primary">tgt</name>
    <name type="ordered locus">HH_0841</name>
</gene>
<protein>
    <recommendedName>
        <fullName evidence="1">Queuine tRNA-ribosyltransferase</fullName>
        <ecNumber evidence="1">2.4.2.29</ecNumber>
    </recommendedName>
    <alternativeName>
        <fullName evidence="1">Guanine insertion enzyme</fullName>
    </alternativeName>
    <alternativeName>
        <fullName evidence="1">tRNA-guanine transglycosylase</fullName>
    </alternativeName>
</protein>
<accession>Q7VHX2</accession>
<proteinExistence type="inferred from homology"/>
<reference key="1">
    <citation type="journal article" date="2003" name="Proc. Natl. Acad. Sci. U.S.A.">
        <title>The complete genome sequence of the carcinogenic bacterium Helicobacter hepaticus.</title>
        <authorList>
            <person name="Suerbaum S."/>
            <person name="Josenhans C."/>
            <person name="Sterzenbach T."/>
            <person name="Drescher B."/>
            <person name="Brandt P."/>
            <person name="Bell M."/>
            <person name="Droege M."/>
            <person name="Fartmann B."/>
            <person name="Fischer H.-P."/>
            <person name="Ge Z."/>
            <person name="Hoerster A."/>
            <person name="Holland R."/>
            <person name="Klein K."/>
            <person name="Koenig J."/>
            <person name="Macko L."/>
            <person name="Mendz G.L."/>
            <person name="Nyakatura G."/>
            <person name="Schauer D.B."/>
            <person name="Shen Z."/>
            <person name="Weber J."/>
            <person name="Frosch M."/>
            <person name="Fox J.G."/>
        </authorList>
    </citation>
    <scope>NUCLEOTIDE SEQUENCE [LARGE SCALE GENOMIC DNA]</scope>
    <source>
        <strain>ATCC 51449 / 3B1</strain>
    </source>
</reference>
<keyword id="KW-0328">Glycosyltransferase</keyword>
<keyword id="KW-0479">Metal-binding</keyword>
<keyword id="KW-0671">Queuosine biosynthesis</keyword>
<keyword id="KW-1185">Reference proteome</keyword>
<keyword id="KW-0808">Transferase</keyword>
<keyword id="KW-0819">tRNA processing</keyword>
<keyword id="KW-0862">Zinc</keyword>
<dbReference type="EC" id="2.4.2.29" evidence="1"/>
<dbReference type="EMBL" id="AE017125">
    <property type="protein sequence ID" value="AAP77438.1"/>
    <property type="molecule type" value="Genomic_DNA"/>
</dbReference>
<dbReference type="RefSeq" id="WP_011115681.1">
    <property type="nucleotide sequence ID" value="NC_004917.1"/>
</dbReference>
<dbReference type="SMR" id="Q7VHX2"/>
<dbReference type="STRING" id="235279.HH_0841"/>
<dbReference type="KEGG" id="hhe:HH_0841"/>
<dbReference type="eggNOG" id="COG0343">
    <property type="taxonomic scope" value="Bacteria"/>
</dbReference>
<dbReference type="HOGENOM" id="CLU_022060_0_1_7"/>
<dbReference type="OrthoDB" id="9805417at2"/>
<dbReference type="UniPathway" id="UPA00392"/>
<dbReference type="Proteomes" id="UP000002495">
    <property type="component" value="Chromosome"/>
</dbReference>
<dbReference type="GO" id="GO:0005829">
    <property type="term" value="C:cytosol"/>
    <property type="evidence" value="ECO:0007669"/>
    <property type="project" value="TreeGrafter"/>
</dbReference>
<dbReference type="GO" id="GO:0046872">
    <property type="term" value="F:metal ion binding"/>
    <property type="evidence" value="ECO:0007669"/>
    <property type="project" value="UniProtKB-KW"/>
</dbReference>
<dbReference type="GO" id="GO:0008479">
    <property type="term" value="F:tRNA-guanosine(34) queuine transglycosylase activity"/>
    <property type="evidence" value="ECO:0007669"/>
    <property type="project" value="UniProtKB-UniRule"/>
</dbReference>
<dbReference type="GO" id="GO:0008616">
    <property type="term" value="P:queuosine biosynthetic process"/>
    <property type="evidence" value="ECO:0007669"/>
    <property type="project" value="UniProtKB-UniRule"/>
</dbReference>
<dbReference type="GO" id="GO:0101030">
    <property type="term" value="P:tRNA-guanine transglycosylation"/>
    <property type="evidence" value="ECO:0007669"/>
    <property type="project" value="InterPro"/>
</dbReference>
<dbReference type="Gene3D" id="3.20.20.105">
    <property type="entry name" value="Queuine tRNA-ribosyltransferase-like"/>
    <property type="match status" value="1"/>
</dbReference>
<dbReference type="HAMAP" id="MF_00168">
    <property type="entry name" value="Q_tRNA_Tgt"/>
    <property type="match status" value="1"/>
</dbReference>
<dbReference type="InterPro" id="IPR004803">
    <property type="entry name" value="TGT"/>
</dbReference>
<dbReference type="InterPro" id="IPR036511">
    <property type="entry name" value="TGT-like_sf"/>
</dbReference>
<dbReference type="InterPro" id="IPR002616">
    <property type="entry name" value="tRNA_ribo_trans-like"/>
</dbReference>
<dbReference type="NCBIfam" id="TIGR00430">
    <property type="entry name" value="Q_tRNA_tgt"/>
    <property type="match status" value="1"/>
</dbReference>
<dbReference type="NCBIfam" id="TIGR00449">
    <property type="entry name" value="tgt_general"/>
    <property type="match status" value="1"/>
</dbReference>
<dbReference type="PANTHER" id="PTHR43530">
    <property type="entry name" value="QUEUINE TRNA-RIBOSYLTRANSFERASE CATALYTIC SUBUNIT 1"/>
    <property type="match status" value="1"/>
</dbReference>
<dbReference type="PANTHER" id="PTHR43530:SF1">
    <property type="entry name" value="QUEUINE TRNA-RIBOSYLTRANSFERASE CATALYTIC SUBUNIT 1"/>
    <property type="match status" value="1"/>
</dbReference>
<dbReference type="Pfam" id="PF01702">
    <property type="entry name" value="TGT"/>
    <property type="match status" value="1"/>
</dbReference>
<dbReference type="SUPFAM" id="SSF51713">
    <property type="entry name" value="tRNA-guanine transglycosylase"/>
    <property type="match status" value="1"/>
</dbReference>
<feature type="chain" id="PRO_0000135482" description="Queuine tRNA-ribosyltransferase">
    <location>
        <begin position="1"/>
        <end position="381"/>
    </location>
</feature>
<feature type="region of interest" description="RNA binding" evidence="1">
    <location>
        <begin position="252"/>
        <end position="258"/>
    </location>
</feature>
<feature type="region of interest" description="RNA binding; important for wobble base 34 recognition" evidence="1">
    <location>
        <begin position="276"/>
        <end position="280"/>
    </location>
</feature>
<feature type="active site" description="Proton acceptor" evidence="1">
    <location>
        <position position="90"/>
    </location>
</feature>
<feature type="active site" description="Nucleophile" evidence="1">
    <location>
        <position position="271"/>
    </location>
</feature>
<feature type="binding site" evidence="1">
    <location>
        <begin position="90"/>
        <end position="94"/>
    </location>
    <ligand>
        <name>substrate</name>
    </ligand>
</feature>
<feature type="binding site" evidence="1">
    <location>
        <position position="144"/>
    </location>
    <ligand>
        <name>substrate</name>
    </ligand>
</feature>
<feature type="binding site" evidence="1">
    <location>
        <position position="193"/>
    </location>
    <ligand>
        <name>substrate</name>
    </ligand>
</feature>
<feature type="binding site" evidence="1">
    <location>
        <position position="221"/>
    </location>
    <ligand>
        <name>substrate</name>
    </ligand>
</feature>
<feature type="binding site" evidence="1">
    <location>
        <position position="309"/>
    </location>
    <ligand>
        <name>Zn(2+)</name>
        <dbReference type="ChEBI" id="CHEBI:29105"/>
    </ligand>
</feature>
<feature type="binding site" evidence="1">
    <location>
        <position position="311"/>
    </location>
    <ligand>
        <name>Zn(2+)</name>
        <dbReference type="ChEBI" id="CHEBI:29105"/>
    </ligand>
</feature>
<feature type="binding site" evidence="1">
    <location>
        <position position="314"/>
    </location>
    <ligand>
        <name>Zn(2+)</name>
        <dbReference type="ChEBI" id="CHEBI:29105"/>
    </ligand>
</feature>
<feature type="binding site" evidence="1">
    <location>
        <position position="340"/>
    </location>
    <ligand>
        <name>Zn(2+)</name>
        <dbReference type="ChEBI" id="CHEBI:29105"/>
    </ligand>
</feature>